<organism>
    <name type="scientific">Reclinomonas americana</name>
    <dbReference type="NCBI Taxonomy" id="48483"/>
    <lineage>
        <taxon>Eukaryota</taxon>
        <taxon>Discoba</taxon>
        <taxon>Jakobida</taxon>
        <taxon>Histionina</taxon>
        <taxon>Histionidae</taxon>
        <taxon>Reclinomonas</taxon>
    </lineage>
</organism>
<proteinExistence type="inferred from homology"/>
<reference key="1">
    <citation type="journal article" date="1996" name="Proc. Natl. Acad. Sci. U.S.A.">
        <title>Genes encoding the same three subunits of respiratory complex II are present in the mitochondrial DNA of two phylogenetically distant eukaryotes.</title>
        <authorList>
            <person name="Burger G."/>
            <person name="Lang B.F."/>
            <person name="Reith M."/>
            <person name="Gray M.W."/>
        </authorList>
    </citation>
    <scope>NUCLEOTIDE SEQUENCE [GENOMIC DNA]</scope>
    <source>
        <strain>ATCC 50394</strain>
    </source>
</reference>
<evidence type="ECO:0000250" key="1"/>
<evidence type="ECO:0000255" key="2"/>
<evidence type="ECO:0000305" key="3"/>
<feature type="chain" id="PRO_0000203521" description="Succinate dehydrogenase cytochrome b560 subunit">
    <location>
        <begin position="1"/>
        <end position="144"/>
    </location>
</feature>
<feature type="transmembrane region" description="Helical" evidence="2">
    <location>
        <begin position="40"/>
        <end position="60"/>
    </location>
</feature>
<feature type="transmembrane region" description="Helical" evidence="2">
    <location>
        <begin position="84"/>
        <end position="104"/>
    </location>
</feature>
<feature type="transmembrane region" description="Helical" evidence="2">
    <location>
        <begin position="124"/>
        <end position="144"/>
    </location>
</feature>
<feature type="binding site" description="axial binding residue" evidence="1">
    <location>
        <position position="101"/>
    </location>
    <ligand>
        <name>heme</name>
        <dbReference type="ChEBI" id="CHEBI:30413"/>
        <note>ligand shared with second transmembrane subunit</note>
    </ligand>
    <ligandPart>
        <name>Fe</name>
        <dbReference type="ChEBI" id="CHEBI:18248"/>
    </ligandPart>
</feature>
<keyword id="KW-0249">Electron transport</keyword>
<keyword id="KW-0349">Heme</keyword>
<keyword id="KW-0408">Iron</keyword>
<keyword id="KW-0472">Membrane</keyword>
<keyword id="KW-0479">Metal-binding</keyword>
<keyword id="KW-0496">Mitochondrion</keyword>
<keyword id="KW-0999">Mitochondrion inner membrane</keyword>
<keyword id="KW-0812">Transmembrane</keyword>
<keyword id="KW-1133">Transmembrane helix</keyword>
<keyword id="KW-0813">Transport</keyword>
<keyword id="KW-0816">Tricarboxylic acid cycle</keyword>
<protein>
    <recommendedName>
        <fullName>Succinate dehydrogenase cytochrome b560 subunit</fullName>
    </recommendedName>
    <alternativeName>
        <fullName>Succinate dehydrogenase, subunit III</fullName>
    </alternativeName>
</protein>
<geneLocation type="mitochondrion"/>
<sequence>MISINFNFLKIKGIINMNINRPISPHLTIYKLQITNTLSIFHRITGGVLALTLCFFILILKMLNFHLSSYAFYSIAYTLNQYSGFLFIAISFFLLLFIFYHLFAGLRHLVWDAGYALEIENVYLTGYIMLGLAFLFTLIAWIIF</sequence>
<accession>P80481</accession>
<comment type="function">
    <text evidence="1">Membrane-anchoring subunit of succinate dehydrogenase (SDH) that is involved in complex II of the mitochondrial electron transport chain and is responsible for transferring electrons from succinate to ubiquinone (coenzyme Q).</text>
</comment>
<comment type="cofactor">
    <cofactor evidence="1">
        <name>heme</name>
        <dbReference type="ChEBI" id="CHEBI:30413"/>
    </cofactor>
    <text evidence="1">The heme is bound between the two transmembrane subunits.</text>
</comment>
<comment type="pathway">
    <text>Carbohydrate metabolism; tricarboxylic acid cycle.</text>
</comment>
<comment type="subunit">
    <text>Forms part of complex II containing four subunits: a 70 kDa flavoprotein (FP), a 27 kDa iron-sulfur protein (IP), a cytochrome B and a membrane-anchoring protein.</text>
</comment>
<comment type="subcellular location">
    <subcellularLocation>
        <location evidence="1">Mitochondrion inner membrane</location>
        <topology evidence="1">Multi-pass membrane protein</topology>
    </subcellularLocation>
</comment>
<comment type="similarity">
    <text evidence="3">Belongs to the cytochrome b560 family.</text>
</comment>
<gene>
    <name type="primary">SDH3</name>
    <name type="synonym">SDHC</name>
</gene>
<name>C560_RECAM</name>
<dbReference type="EMBL" id="AF007261">
    <property type="protein sequence ID" value="AAD11911.1"/>
    <property type="molecule type" value="Genomic_DNA"/>
</dbReference>
<dbReference type="PIR" id="S78178">
    <property type="entry name" value="S78178"/>
</dbReference>
<dbReference type="RefSeq" id="NP_044796.1">
    <property type="nucleotide sequence ID" value="NC_001823.1"/>
</dbReference>
<dbReference type="SMR" id="P80481"/>
<dbReference type="GeneID" id="801072"/>
<dbReference type="UniPathway" id="UPA00223"/>
<dbReference type="GO" id="GO:0005743">
    <property type="term" value="C:mitochondrial inner membrane"/>
    <property type="evidence" value="ECO:0007669"/>
    <property type="project" value="UniProtKB-SubCell"/>
</dbReference>
<dbReference type="GO" id="GO:0009055">
    <property type="term" value="F:electron transfer activity"/>
    <property type="evidence" value="ECO:0007669"/>
    <property type="project" value="InterPro"/>
</dbReference>
<dbReference type="GO" id="GO:0046872">
    <property type="term" value="F:metal ion binding"/>
    <property type="evidence" value="ECO:0007669"/>
    <property type="project" value="UniProtKB-KW"/>
</dbReference>
<dbReference type="GO" id="GO:0006121">
    <property type="term" value="P:mitochondrial electron transport, succinate to ubiquinone"/>
    <property type="evidence" value="ECO:0007669"/>
    <property type="project" value="TreeGrafter"/>
</dbReference>
<dbReference type="GO" id="GO:0006099">
    <property type="term" value="P:tricarboxylic acid cycle"/>
    <property type="evidence" value="ECO:0007669"/>
    <property type="project" value="UniProtKB-UniPathway"/>
</dbReference>
<dbReference type="CDD" id="cd03499">
    <property type="entry name" value="SQR_TypeC_SdhC"/>
    <property type="match status" value="1"/>
</dbReference>
<dbReference type="Gene3D" id="1.20.1300.10">
    <property type="entry name" value="Fumarate reductase/succinate dehydrogenase, transmembrane subunit"/>
    <property type="match status" value="1"/>
</dbReference>
<dbReference type="InterPro" id="IPR034804">
    <property type="entry name" value="SQR/QFR_C/D"/>
</dbReference>
<dbReference type="InterPro" id="IPR018495">
    <property type="entry name" value="Succ_DH_cyt_bsu_CS"/>
</dbReference>
<dbReference type="InterPro" id="IPR014314">
    <property type="entry name" value="Succ_DH_cytb556"/>
</dbReference>
<dbReference type="InterPro" id="IPR000701">
    <property type="entry name" value="SuccDH_FuR_B_TM-su"/>
</dbReference>
<dbReference type="NCBIfam" id="TIGR02970">
    <property type="entry name" value="succ_dehyd_cytB"/>
    <property type="match status" value="1"/>
</dbReference>
<dbReference type="PANTHER" id="PTHR10978">
    <property type="entry name" value="SUCCINATE DEHYDROGENASE CYTOCHROME B560 SUBUNIT"/>
    <property type="match status" value="1"/>
</dbReference>
<dbReference type="PANTHER" id="PTHR10978:SF5">
    <property type="entry name" value="SUCCINATE DEHYDROGENASE CYTOCHROME B560 SUBUNIT, MITOCHONDRIAL"/>
    <property type="match status" value="1"/>
</dbReference>
<dbReference type="Pfam" id="PF01127">
    <property type="entry name" value="Sdh_cyt"/>
    <property type="match status" value="1"/>
</dbReference>
<dbReference type="PIRSF" id="PIRSF000178">
    <property type="entry name" value="SDH_cyt_b560"/>
    <property type="match status" value="1"/>
</dbReference>
<dbReference type="SUPFAM" id="SSF81343">
    <property type="entry name" value="Fumarate reductase respiratory complex transmembrane subunits"/>
    <property type="match status" value="1"/>
</dbReference>
<dbReference type="PROSITE" id="PS01000">
    <property type="entry name" value="SDH_CYT_1"/>
    <property type="match status" value="1"/>
</dbReference>
<dbReference type="PROSITE" id="PS01001">
    <property type="entry name" value="SDH_CYT_2"/>
    <property type="match status" value="1"/>
</dbReference>